<organism>
    <name type="scientific">Rickettsia bellii (strain OSU 85-389)</name>
    <dbReference type="NCBI Taxonomy" id="391896"/>
    <lineage>
        <taxon>Bacteria</taxon>
        <taxon>Pseudomonadati</taxon>
        <taxon>Pseudomonadota</taxon>
        <taxon>Alphaproteobacteria</taxon>
        <taxon>Rickettsiales</taxon>
        <taxon>Rickettsiaceae</taxon>
        <taxon>Rickettsieae</taxon>
        <taxon>Rickettsia</taxon>
        <taxon>belli group</taxon>
    </lineage>
</organism>
<proteinExistence type="inferred from homology"/>
<feature type="chain" id="PRO_1000018105" description="Arginine--tRNA ligase">
    <location>
        <begin position="1"/>
        <end position="576"/>
    </location>
</feature>
<feature type="short sequence motif" description="'HIGH' region">
    <location>
        <begin position="126"/>
        <end position="136"/>
    </location>
</feature>
<evidence type="ECO:0000255" key="1">
    <source>
        <dbReference type="HAMAP-Rule" id="MF_00123"/>
    </source>
</evidence>
<sequence length="576" mass="65078">MNIFNKLKHDIITASTQLYNNSEIANHASIETPKDSFNGDLSSNIAMIIAAKKNVPPREVALKFKEILNELPYIASIEIAGPGFINFTIKADSWHTAIKDILQNESKFFEIDVDKNKNINIEYVSANPTGPMHIGHARGAVYGDVLANILKKVGYPVTKEYYVNDAGSQINDLVSTVILRYREALGEKITITEGLYPGEYLIPVGQALAKEYGDKLLNMDELERFKIVKNFAIQKMLDLNKEDLKELGVKHDVFFSEQTLHDNGKIEKTVKLLTDMGLIYEGSVPAPKGKVHAEWENRTQELFKSTKYGDDQDRPIRKADGSWTYFASDLAYAKDKIDRGANHLIYVLGADHSGYVKRIEATVKALGKEQVKVDVKICQLVNFVENGVPVKMSKRLGTFASVQDVNHEVGKDIIRFMMLTRENNKTLDFDLIKVKEQSKENPIFYVQYAHVRTLSILSKAMETIPQSYNSFEAGTYDLSLLSSEEEIEIIKLLASWTKTLETAAKYFEPHRVAFYLINLASKFHALWNFGKENNDYRFIIENNVELTTARLALAKAIQKIIASGLEVIGVEPMTRM</sequence>
<comment type="catalytic activity">
    <reaction evidence="1">
        <text>tRNA(Arg) + L-arginine + ATP = L-arginyl-tRNA(Arg) + AMP + diphosphate</text>
        <dbReference type="Rhea" id="RHEA:20301"/>
        <dbReference type="Rhea" id="RHEA-COMP:9658"/>
        <dbReference type="Rhea" id="RHEA-COMP:9673"/>
        <dbReference type="ChEBI" id="CHEBI:30616"/>
        <dbReference type="ChEBI" id="CHEBI:32682"/>
        <dbReference type="ChEBI" id="CHEBI:33019"/>
        <dbReference type="ChEBI" id="CHEBI:78442"/>
        <dbReference type="ChEBI" id="CHEBI:78513"/>
        <dbReference type="ChEBI" id="CHEBI:456215"/>
        <dbReference type="EC" id="6.1.1.19"/>
    </reaction>
</comment>
<comment type="subunit">
    <text evidence="1">Monomer.</text>
</comment>
<comment type="subcellular location">
    <subcellularLocation>
        <location evidence="1">Cytoplasm</location>
    </subcellularLocation>
</comment>
<comment type="similarity">
    <text evidence="1">Belongs to the class-I aminoacyl-tRNA synthetase family.</text>
</comment>
<gene>
    <name evidence="1" type="primary">argS</name>
    <name type="ordered locus">A1I_00355</name>
</gene>
<name>SYR_RICB8</name>
<dbReference type="EC" id="6.1.1.19" evidence="1"/>
<dbReference type="EMBL" id="CP000849">
    <property type="protein sequence ID" value="ABV78477.1"/>
    <property type="molecule type" value="Genomic_DNA"/>
</dbReference>
<dbReference type="RefSeq" id="WP_011477953.1">
    <property type="nucleotide sequence ID" value="NC_009883.1"/>
</dbReference>
<dbReference type="SMR" id="A8GUI1"/>
<dbReference type="KEGG" id="rbo:A1I_00355"/>
<dbReference type="HOGENOM" id="CLU_006406_0_1_5"/>
<dbReference type="GO" id="GO:0005737">
    <property type="term" value="C:cytoplasm"/>
    <property type="evidence" value="ECO:0007669"/>
    <property type="project" value="UniProtKB-SubCell"/>
</dbReference>
<dbReference type="GO" id="GO:0004814">
    <property type="term" value="F:arginine-tRNA ligase activity"/>
    <property type="evidence" value="ECO:0007669"/>
    <property type="project" value="UniProtKB-UniRule"/>
</dbReference>
<dbReference type="GO" id="GO:0005524">
    <property type="term" value="F:ATP binding"/>
    <property type="evidence" value="ECO:0007669"/>
    <property type="project" value="UniProtKB-UniRule"/>
</dbReference>
<dbReference type="GO" id="GO:0006420">
    <property type="term" value="P:arginyl-tRNA aminoacylation"/>
    <property type="evidence" value="ECO:0007669"/>
    <property type="project" value="UniProtKB-UniRule"/>
</dbReference>
<dbReference type="CDD" id="cd00671">
    <property type="entry name" value="ArgRS_core"/>
    <property type="match status" value="1"/>
</dbReference>
<dbReference type="Gene3D" id="3.30.1360.70">
    <property type="entry name" value="Arginyl tRNA synthetase N-terminal domain"/>
    <property type="match status" value="1"/>
</dbReference>
<dbReference type="Gene3D" id="3.40.50.620">
    <property type="entry name" value="HUPs"/>
    <property type="match status" value="1"/>
</dbReference>
<dbReference type="Gene3D" id="1.10.730.10">
    <property type="entry name" value="Isoleucyl-tRNA Synthetase, Domain 1"/>
    <property type="match status" value="1"/>
</dbReference>
<dbReference type="HAMAP" id="MF_00123">
    <property type="entry name" value="Arg_tRNA_synth"/>
    <property type="match status" value="1"/>
</dbReference>
<dbReference type="InterPro" id="IPR001412">
    <property type="entry name" value="aa-tRNA-synth_I_CS"/>
</dbReference>
<dbReference type="InterPro" id="IPR001278">
    <property type="entry name" value="Arg-tRNA-ligase"/>
</dbReference>
<dbReference type="InterPro" id="IPR005148">
    <property type="entry name" value="Arg-tRNA-synth_N"/>
</dbReference>
<dbReference type="InterPro" id="IPR036695">
    <property type="entry name" value="Arg-tRNA-synth_N_sf"/>
</dbReference>
<dbReference type="InterPro" id="IPR035684">
    <property type="entry name" value="ArgRS_core"/>
</dbReference>
<dbReference type="InterPro" id="IPR008909">
    <property type="entry name" value="DALR_anticod-bd"/>
</dbReference>
<dbReference type="InterPro" id="IPR014729">
    <property type="entry name" value="Rossmann-like_a/b/a_fold"/>
</dbReference>
<dbReference type="InterPro" id="IPR009080">
    <property type="entry name" value="tRNAsynth_Ia_anticodon-bd"/>
</dbReference>
<dbReference type="NCBIfam" id="TIGR00456">
    <property type="entry name" value="argS"/>
    <property type="match status" value="1"/>
</dbReference>
<dbReference type="PANTHER" id="PTHR11956:SF5">
    <property type="entry name" value="ARGININE--TRNA LIGASE, CYTOPLASMIC"/>
    <property type="match status" value="1"/>
</dbReference>
<dbReference type="PANTHER" id="PTHR11956">
    <property type="entry name" value="ARGINYL-TRNA SYNTHETASE"/>
    <property type="match status" value="1"/>
</dbReference>
<dbReference type="Pfam" id="PF03485">
    <property type="entry name" value="Arg_tRNA_synt_N"/>
    <property type="match status" value="1"/>
</dbReference>
<dbReference type="Pfam" id="PF05746">
    <property type="entry name" value="DALR_1"/>
    <property type="match status" value="1"/>
</dbReference>
<dbReference type="Pfam" id="PF00750">
    <property type="entry name" value="tRNA-synt_1d"/>
    <property type="match status" value="1"/>
</dbReference>
<dbReference type="PRINTS" id="PR01038">
    <property type="entry name" value="TRNASYNTHARG"/>
</dbReference>
<dbReference type="SMART" id="SM01016">
    <property type="entry name" value="Arg_tRNA_synt_N"/>
    <property type="match status" value="1"/>
</dbReference>
<dbReference type="SMART" id="SM00836">
    <property type="entry name" value="DALR_1"/>
    <property type="match status" value="1"/>
</dbReference>
<dbReference type="SUPFAM" id="SSF47323">
    <property type="entry name" value="Anticodon-binding domain of a subclass of class I aminoacyl-tRNA synthetases"/>
    <property type="match status" value="1"/>
</dbReference>
<dbReference type="SUPFAM" id="SSF55190">
    <property type="entry name" value="Arginyl-tRNA synthetase (ArgRS), N-terminal 'additional' domain"/>
    <property type="match status" value="1"/>
</dbReference>
<dbReference type="SUPFAM" id="SSF52374">
    <property type="entry name" value="Nucleotidylyl transferase"/>
    <property type="match status" value="1"/>
</dbReference>
<dbReference type="PROSITE" id="PS00178">
    <property type="entry name" value="AA_TRNA_LIGASE_I"/>
    <property type="match status" value="1"/>
</dbReference>
<protein>
    <recommendedName>
        <fullName evidence="1">Arginine--tRNA ligase</fullName>
        <ecNumber evidence="1">6.1.1.19</ecNumber>
    </recommendedName>
    <alternativeName>
        <fullName evidence="1">Arginyl-tRNA synthetase</fullName>
        <shortName evidence="1">ArgRS</shortName>
    </alternativeName>
</protein>
<accession>A8GUI1</accession>
<keyword id="KW-0030">Aminoacyl-tRNA synthetase</keyword>
<keyword id="KW-0067">ATP-binding</keyword>
<keyword id="KW-0963">Cytoplasm</keyword>
<keyword id="KW-0436">Ligase</keyword>
<keyword id="KW-0547">Nucleotide-binding</keyword>
<keyword id="KW-0648">Protein biosynthesis</keyword>
<reference key="1">
    <citation type="submission" date="2007-09" db="EMBL/GenBank/DDBJ databases">
        <title>Complete genome sequencing of Rickettsia bellii.</title>
        <authorList>
            <person name="Madan A."/>
            <person name="Lee H."/>
            <person name="Madan A."/>
            <person name="Yoon J.-G."/>
            <person name="Ryu G.-Y."/>
            <person name="Dasch G."/>
            <person name="Ereemeva M."/>
        </authorList>
    </citation>
    <scope>NUCLEOTIDE SEQUENCE [LARGE SCALE GENOMIC DNA]</scope>
    <source>
        <strain>OSU 85-389</strain>
    </source>
</reference>